<protein>
    <recommendedName>
        <fullName>HMG box transcription factor BBX</fullName>
    </recommendedName>
    <alternativeName>
        <fullName>Bobby sox homolog</fullName>
    </alternativeName>
    <alternativeName>
        <fullName>HMG box-containing protein 2</fullName>
    </alternativeName>
</protein>
<gene>
    <name type="primary">BBX</name>
    <name type="synonym">HBP2</name>
</gene>
<evidence type="ECO:0000250" key="1">
    <source>
        <dbReference type="UniProtKB" id="Q8VBW5"/>
    </source>
</evidence>
<evidence type="ECO:0000255" key="2"/>
<evidence type="ECO:0000255" key="3">
    <source>
        <dbReference type="PROSITE-ProRule" id="PRU00267"/>
    </source>
</evidence>
<evidence type="ECO:0000256" key="4">
    <source>
        <dbReference type="SAM" id="MobiDB-lite"/>
    </source>
</evidence>
<evidence type="ECO:0000269" key="5">
    <source>
    </source>
</evidence>
<evidence type="ECO:0000303" key="6">
    <source>
    </source>
</evidence>
<evidence type="ECO:0000303" key="7">
    <source>
    </source>
</evidence>
<evidence type="ECO:0000303" key="8">
    <source ref="2"/>
</evidence>
<evidence type="ECO:0000305" key="9"/>
<evidence type="ECO:0007744" key="10">
    <source>
    </source>
</evidence>
<evidence type="ECO:0007744" key="11">
    <source>
    </source>
</evidence>
<evidence type="ECO:0007744" key="12">
    <source>
    </source>
</evidence>
<evidence type="ECO:0007744" key="13">
    <source>
    </source>
</evidence>
<evidence type="ECO:0007744" key="14">
    <source>
    </source>
</evidence>
<evidence type="ECO:0007744" key="15">
    <source>
    </source>
</evidence>
<dbReference type="EMBL" id="AF276948">
    <property type="protein sequence ID" value="AAL68984.1"/>
    <property type="molecule type" value="mRNA"/>
</dbReference>
<dbReference type="EMBL" id="AF276949">
    <property type="protein sequence ID" value="AAL68985.1"/>
    <property type="molecule type" value="mRNA"/>
</dbReference>
<dbReference type="EMBL" id="AF454941">
    <property type="protein sequence ID" value="AAL58870.1"/>
    <property type="molecule type" value="mRNA"/>
</dbReference>
<dbReference type="EMBL" id="AF454942">
    <property type="protein sequence ID" value="AAL58871.1"/>
    <property type="molecule type" value="mRNA"/>
</dbReference>
<dbReference type="EMBL" id="AL136769">
    <property type="protein sequence ID" value="CAB66703.1"/>
    <property type="molecule type" value="mRNA"/>
</dbReference>
<dbReference type="EMBL" id="AL834307">
    <property type="protein sequence ID" value="CAD38977.1"/>
    <property type="molecule type" value="mRNA"/>
</dbReference>
<dbReference type="EMBL" id="AC068765">
    <property type="status" value="NOT_ANNOTATED_CDS"/>
    <property type="molecule type" value="Genomic_DNA"/>
</dbReference>
<dbReference type="EMBL" id="AC072044">
    <property type="status" value="NOT_ANNOTATED_CDS"/>
    <property type="molecule type" value="Genomic_DNA"/>
</dbReference>
<dbReference type="EMBL" id="AC117477">
    <property type="status" value="NOT_ANNOTATED_CDS"/>
    <property type="molecule type" value="Genomic_DNA"/>
</dbReference>
<dbReference type="EMBL" id="BC012837">
    <property type="protein sequence ID" value="AAH12837.2"/>
    <property type="molecule type" value="mRNA"/>
</dbReference>
<dbReference type="EMBL" id="BC110903">
    <property type="protein sequence ID" value="AAI10904.1"/>
    <property type="status" value="ALT_SEQ"/>
    <property type="molecule type" value="mRNA"/>
</dbReference>
<dbReference type="EMBL" id="BC131718">
    <property type="protein sequence ID" value="AAI31719.1"/>
    <property type="molecule type" value="mRNA"/>
</dbReference>
<dbReference type="CCDS" id="CCDS2950.1">
    <molecule id="Q8WY36-2"/>
</dbReference>
<dbReference type="CCDS" id="CCDS46881.1">
    <molecule id="Q8WY36-1"/>
</dbReference>
<dbReference type="CCDS" id="CCDS63712.1">
    <molecule id="Q8WY36-3"/>
</dbReference>
<dbReference type="RefSeq" id="NP_001136040.1">
    <molecule id="Q8WY36-1"/>
    <property type="nucleotide sequence ID" value="NM_001142568.3"/>
</dbReference>
<dbReference type="RefSeq" id="NP_001263215.1">
    <molecule id="Q8WY36-3"/>
    <property type="nucleotide sequence ID" value="NM_001276286.2"/>
</dbReference>
<dbReference type="RefSeq" id="NP_064620.2">
    <molecule id="Q8WY36-2"/>
    <property type="nucleotide sequence ID" value="NM_020235.6"/>
</dbReference>
<dbReference type="RefSeq" id="XP_005247699.1">
    <molecule id="Q8WY36-1"/>
    <property type="nucleotide sequence ID" value="XM_005247642.5"/>
</dbReference>
<dbReference type="RefSeq" id="XP_005247700.1">
    <molecule id="Q8WY36-1"/>
    <property type="nucleotide sequence ID" value="XM_005247643.5"/>
</dbReference>
<dbReference type="RefSeq" id="XP_005247701.1">
    <molecule id="Q8WY36-1"/>
    <property type="nucleotide sequence ID" value="XM_005247644.5"/>
</dbReference>
<dbReference type="RefSeq" id="XP_011511302.1">
    <molecule id="Q8WY36-1"/>
    <property type="nucleotide sequence ID" value="XM_011513000.3"/>
</dbReference>
<dbReference type="RefSeq" id="XP_011511303.1">
    <molecule id="Q8WY36-1"/>
    <property type="nucleotide sequence ID" value="XM_011513001.3"/>
</dbReference>
<dbReference type="RefSeq" id="XP_011511306.1">
    <property type="nucleotide sequence ID" value="XM_011513004.2"/>
</dbReference>
<dbReference type="RefSeq" id="XP_016862370.1">
    <property type="nucleotide sequence ID" value="XM_017006881.1"/>
</dbReference>
<dbReference type="RefSeq" id="XP_016862371.1">
    <property type="nucleotide sequence ID" value="XM_017006882.1"/>
</dbReference>
<dbReference type="RefSeq" id="XP_024309414.1">
    <molecule id="Q8WY36-1"/>
    <property type="nucleotide sequence ID" value="XM_024453646.2"/>
</dbReference>
<dbReference type="RefSeq" id="XP_024309415.1">
    <molecule id="Q8WY36-1"/>
    <property type="nucleotide sequence ID" value="XM_024453647.2"/>
</dbReference>
<dbReference type="RefSeq" id="XP_024309416.1">
    <molecule id="Q8WY36-1"/>
    <property type="nucleotide sequence ID" value="XM_024453648.2"/>
</dbReference>
<dbReference type="RefSeq" id="XP_024309417.1">
    <molecule id="Q8WY36-1"/>
    <property type="nucleotide sequence ID" value="XM_024453649.2"/>
</dbReference>
<dbReference type="RefSeq" id="XP_024309419.1">
    <molecule id="Q8WY36-1"/>
    <property type="nucleotide sequence ID" value="XM_024453651.2"/>
</dbReference>
<dbReference type="RefSeq" id="XP_024309421.1">
    <molecule id="Q8WY36-1"/>
    <property type="nucleotide sequence ID" value="XM_024453653.2"/>
</dbReference>
<dbReference type="RefSeq" id="XP_047304553.1">
    <molecule id="Q8WY36-1"/>
    <property type="nucleotide sequence ID" value="XM_047448597.1"/>
</dbReference>
<dbReference type="RefSeq" id="XP_047304555.1">
    <molecule id="Q8WY36-2"/>
    <property type="nucleotide sequence ID" value="XM_047448599.1"/>
</dbReference>
<dbReference type="RefSeq" id="XP_054203257.1">
    <molecule id="Q8WY36-1"/>
    <property type="nucleotide sequence ID" value="XM_054347282.1"/>
</dbReference>
<dbReference type="RefSeq" id="XP_054203258.1">
    <molecule id="Q8WY36-1"/>
    <property type="nucleotide sequence ID" value="XM_054347283.1"/>
</dbReference>
<dbReference type="RefSeq" id="XP_054203259.1">
    <molecule id="Q8WY36-1"/>
    <property type="nucleotide sequence ID" value="XM_054347284.1"/>
</dbReference>
<dbReference type="RefSeq" id="XP_054203260.1">
    <molecule id="Q8WY36-1"/>
    <property type="nucleotide sequence ID" value="XM_054347285.1"/>
</dbReference>
<dbReference type="RefSeq" id="XP_054203261.1">
    <molecule id="Q8WY36-1"/>
    <property type="nucleotide sequence ID" value="XM_054347286.1"/>
</dbReference>
<dbReference type="RefSeq" id="XP_054203262.1">
    <molecule id="Q8WY36-1"/>
    <property type="nucleotide sequence ID" value="XM_054347287.1"/>
</dbReference>
<dbReference type="RefSeq" id="XP_054203263.1">
    <molecule id="Q8WY36-1"/>
    <property type="nucleotide sequence ID" value="XM_054347288.1"/>
</dbReference>
<dbReference type="RefSeq" id="XP_054203264.1">
    <molecule id="Q8WY36-1"/>
    <property type="nucleotide sequence ID" value="XM_054347289.1"/>
</dbReference>
<dbReference type="RefSeq" id="XP_054203265.1">
    <molecule id="Q8WY36-1"/>
    <property type="nucleotide sequence ID" value="XM_054347290.1"/>
</dbReference>
<dbReference type="RefSeq" id="XP_054203270.1">
    <molecule id="Q8WY36-2"/>
    <property type="nucleotide sequence ID" value="XM_054347295.1"/>
</dbReference>
<dbReference type="RefSeq" id="XP_054203273.1">
    <molecule id="Q8WY36-3"/>
    <property type="nucleotide sequence ID" value="XM_054347298.1"/>
</dbReference>
<dbReference type="SMR" id="Q8WY36"/>
<dbReference type="BioGRID" id="121304">
    <property type="interactions" value="125"/>
</dbReference>
<dbReference type="FunCoup" id="Q8WY36">
    <property type="interactions" value="2488"/>
</dbReference>
<dbReference type="IntAct" id="Q8WY36">
    <property type="interactions" value="74"/>
</dbReference>
<dbReference type="MINT" id="Q8WY36"/>
<dbReference type="STRING" id="9606.ENSP00000319974"/>
<dbReference type="GlyCosmos" id="Q8WY36">
    <property type="glycosylation" value="4 sites, 2 glycans"/>
</dbReference>
<dbReference type="GlyGen" id="Q8WY36">
    <property type="glycosylation" value="6 sites, 2 O-linked glycans (6 sites)"/>
</dbReference>
<dbReference type="iPTMnet" id="Q8WY36"/>
<dbReference type="PhosphoSitePlus" id="Q8WY36"/>
<dbReference type="BioMuta" id="BBX"/>
<dbReference type="DMDM" id="74724044"/>
<dbReference type="jPOST" id="Q8WY36"/>
<dbReference type="MassIVE" id="Q8WY36"/>
<dbReference type="PaxDb" id="9606-ENSP00000319974"/>
<dbReference type="PeptideAtlas" id="Q8WY36"/>
<dbReference type="ProteomicsDB" id="476"/>
<dbReference type="ProteomicsDB" id="75124">
    <molecule id="Q8WY36-1"/>
</dbReference>
<dbReference type="ProteomicsDB" id="75125">
    <molecule id="Q8WY36-2"/>
</dbReference>
<dbReference type="Pumba" id="Q8WY36"/>
<dbReference type="Antibodypedia" id="32337">
    <property type="antibodies" value="114 antibodies from 24 providers"/>
</dbReference>
<dbReference type="DNASU" id="56987"/>
<dbReference type="Ensembl" id="ENST00000325805.13">
    <molecule id="Q8WY36-1"/>
    <property type="protein sequence ID" value="ENSP00000319974.8"/>
    <property type="gene ID" value="ENSG00000114439.19"/>
</dbReference>
<dbReference type="Ensembl" id="ENST00000406780.5">
    <molecule id="Q8WY36-2"/>
    <property type="protein sequence ID" value="ENSP00000385530.1"/>
    <property type="gene ID" value="ENSG00000114439.19"/>
</dbReference>
<dbReference type="Ensembl" id="ENST00000415149.6">
    <molecule id="Q8WY36-2"/>
    <property type="protein sequence ID" value="ENSP00000408358.2"/>
    <property type="gene ID" value="ENSG00000114439.19"/>
</dbReference>
<dbReference type="Ensembl" id="ENST00000416476.6">
    <molecule id="Q8WY36-3"/>
    <property type="protein sequence ID" value="ENSP00000403860.2"/>
    <property type="gene ID" value="ENSG00000114439.19"/>
</dbReference>
<dbReference type="GeneID" id="56987"/>
<dbReference type="KEGG" id="hsa:56987"/>
<dbReference type="MANE-Select" id="ENST00000325805.13">
    <property type="protein sequence ID" value="ENSP00000319974.8"/>
    <property type="RefSeq nucleotide sequence ID" value="NM_001142568.3"/>
    <property type="RefSeq protein sequence ID" value="NP_001136040.1"/>
</dbReference>
<dbReference type="UCSC" id="uc003dwk.6">
    <molecule id="Q8WY36-1"/>
    <property type="organism name" value="human"/>
</dbReference>
<dbReference type="AGR" id="HGNC:14422"/>
<dbReference type="CTD" id="56987"/>
<dbReference type="DisGeNET" id="56987"/>
<dbReference type="GeneCards" id="BBX"/>
<dbReference type="HGNC" id="HGNC:14422">
    <property type="gene designation" value="BBX"/>
</dbReference>
<dbReference type="HPA" id="ENSG00000114439">
    <property type="expression patterns" value="Low tissue specificity"/>
</dbReference>
<dbReference type="neXtProt" id="NX_Q8WY36"/>
<dbReference type="OpenTargets" id="ENSG00000114439"/>
<dbReference type="PharmGKB" id="PA25280"/>
<dbReference type="VEuPathDB" id="HostDB:ENSG00000114439"/>
<dbReference type="eggNOG" id="KOG2746">
    <property type="taxonomic scope" value="Eukaryota"/>
</dbReference>
<dbReference type="GeneTree" id="ENSGT00940000158592"/>
<dbReference type="HOGENOM" id="CLU_435423_0_0_1"/>
<dbReference type="InParanoid" id="Q8WY36"/>
<dbReference type="OMA" id="LAEAKMC"/>
<dbReference type="OrthoDB" id="2377365at2759"/>
<dbReference type="PAN-GO" id="Q8WY36">
    <property type="GO annotations" value="4 GO annotations based on evolutionary models"/>
</dbReference>
<dbReference type="PhylomeDB" id="Q8WY36"/>
<dbReference type="TreeFam" id="TF106402"/>
<dbReference type="PathwayCommons" id="Q8WY36"/>
<dbReference type="SignaLink" id="Q8WY36"/>
<dbReference type="BioGRID-ORCS" id="56987">
    <property type="hits" value="26 hits in 1196 CRISPR screens"/>
</dbReference>
<dbReference type="ChiTaRS" id="BBX">
    <property type="organism name" value="human"/>
</dbReference>
<dbReference type="GeneWiki" id="BBX_(gene)"/>
<dbReference type="GenomeRNAi" id="56987"/>
<dbReference type="Pharos" id="Q8WY36">
    <property type="development level" value="Tbio"/>
</dbReference>
<dbReference type="PRO" id="PR:Q8WY36"/>
<dbReference type="Proteomes" id="UP000005640">
    <property type="component" value="Chromosome 3"/>
</dbReference>
<dbReference type="RNAct" id="Q8WY36">
    <property type="molecule type" value="protein"/>
</dbReference>
<dbReference type="Bgee" id="ENSG00000114439">
    <property type="expression patterns" value="Expressed in corpus epididymis and 215 other cell types or tissues"/>
</dbReference>
<dbReference type="ExpressionAtlas" id="Q8WY36">
    <property type="expression patterns" value="baseline and differential"/>
</dbReference>
<dbReference type="GO" id="GO:0000785">
    <property type="term" value="C:chromatin"/>
    <property type="evidence" value="ECO:0000247"/>
    <property type="project" value="NTNU_SB"/>
</dbReference>
<dbReference type="GO" id="GO:0005634">
    <property type="term" value="C:nucleus"/>
    <property type="evidence" value="ECO:0000318"/>
    <property type="project" value="GO_Central"/>
</dbReference>
<dbReference type="GO" id="GO:0000981">
    <property type="term" value="F:DNA-binding transcription factor activity, RNA polymerase II-specific"/>
    <property type="evidence" value="ECO:0000247"/>
    <property type="project" value="NTNU_SB"/>
</dbReference>
<dbReference type="GO" id="GO:0000977">
    <property type="term" value="F:RNA polymerase II transcription regulatory region sequence-specific DNA binding"/>
    <property type="evidence" value="ECO:0000318"/>
    <property type="project" value="GO_Central"/>
</dbReference>
<dbReference type="GO" id="GO:1990837">
    <property type="term" value="F:sequence-specific double-stranded DNA binding"/>
    <property type="evidence" value="ECO:0000314"/>
    <property type="project" value="ARUK-UCL"/>
</dbReference>
<dbReference type="GO" id="GO:0060348">
    <property type="term" value="P:bone development"/>
    <property type="evidence" value="ECO:0007669"/>
    <property type="project" value="Ensembl"/>
</dbReference>
<dbReference type="GO" id="GO:0006357">
    <property type="term" value="P:regulation of transcription by RNA polymerase II"/>
    <property type="evidence" value="ECO:0000318"/>
    <property type="project" value="GO_Central"/>
</dbReference>
<dbReference type="CDD" id="cd21989">
    <property type="entry name" value="HMG-box_HBP2"/>
    <property type="match status" value="1"/>
</dbReference>
<dbReference type="FunFam" id="1.10.30.10:FF:000014">
    <property type="entry name" value="HMG box transcription factor BBX"/>
    <property type="match status" value="1"/>
</dbReference>
<dbReference type="Gene3D" id="1.10.30.10">
    <property type="entry name" value="High mobility group box domain"/>
    <property type="match status" value="1"/>
</dbReference>
<dbReference type="InterPro" id="IPR049523">
    <property type="entry name" value="BBX_HMG-box"/>
</dbReference>
<dbReference type="InterPro" id="IPR052412">
    <property type="entry name" value="CC-Dev_Transcription_Reg"/>
</dbReference>
<dbReference type="InterPro" id="IPR009071">
    <property type="entry name" value="HMG_box_dom"/>
</dbReference>
<dbReference type="InterPro" id="IPR036910">
    <property type="entry name" value="HMG_box_dom_sf"/>
</dbReference>
<dbReference type="InterPro" id="IPR019102">
    <property type="entry name" value="TF_HMG_box_BBX_DUF2028"/>
</dbReference>
<dbReference type="PANTHER" id="PTHR13059:SF10">
    <property type="entry name" value="HMG BOX TRANSCRIPTION FACTOR BBX"/>
    <property type="match status" value="1"/>
</dbReference>
<dbReference type="PANTHER" id="PTHR13059">
    <property type="entry name" value="HMG-BOX TRANSCRIPTION FACTOR BBX"/>
    <property type="match status" value="1"/>
</dbReference>
<dbReference type="Pfam" id="PF09667">
    <property type="entry name" value="DUF2028"/>
    <property type="match status" value="2"/>
</dbReference>
<dbReference type="Pfam" id="PF00505">
    <property type="entry name" value="HMG_box"/>
    <property type="match status" value="1"/>
</dbReference>
<dbReference type="SMART" id="SM00398">
    <property type="entry name" value="HMG"/>
    <property type="match status" value="1"/>
</dbReference>
<dbReference type="SUPFAM" id="SSF47095">
    <property type="entry name" value="HMG-box"/>
    <property type="match status" value="1"/>
</dbReference>
<dbReference type="PROSITE" id="PS50118">
    <property type="entry name" value="HMG_BOX_2"/>
    <property type="match status" value="1"/>
</dbReference>
<reference key="1">
    <citation type="journal article" date="2001" name="Curr. Genet.">
        <title>HBP2: a new mammalian protein that complements the fission yeast MBF transcription complex.</title>
        <authorList>
            <person name="Sanchez-Diaz A."/>
            <person name="Blanco M.A."/>
            <person name="Jones N."/>
            <person name="Moreno S."/>
        </authorList>
    </citation>
    <scope>NUCLEOTIDE SEQUENCE [MRNA] (ISOFORM 1)</scope>
    <scope>FUNCTION</scope>
    <source>
        <tissue>Bone marrow</tissue>
    </source>
</reference>
<reference key="2">
    <citation type="submission" date="2001-12" db="EMBL/GenBank/DDBJ databases">
        <title>BBX is expressed in developing CNS and in neuronal tumours.</title>
        <authorList>
            <person name="Lee C.-J."/>
            <person name="Chan W.-I."/>
            <person name="Appleby V.J."/>
            <person name="Orme A.T."/>
            <person name="Scotting P.J."/>
        </authorList>
    </citation>
    <scope>NUCLEOTIDE SEQUENCE [MRNA] (ISOFORM 2)</scope>
</reference>
<reference key="3">
    <citation type="journal article" date="2001" name="Genome Res.">
        <title>Towards a catalog of human genes and proteins: sequencing and analysis of 500 novel complete protein coding human cDNAs.</title>
        <authorList>
            <person name="Wiemann S."/>
            <person name="Weil B."/>
            <person name="Wellenreuther R."/>
            <person name="Gassenhuber J."/>
            <person name="Glassl S."/>
            <person name="Ansorge W."/>
            <person name="Boecher M."/>
            <person name="Bloecker H."/>
            <person name="Bauersachs S."/>
            <person name="Blum H."/>
            <person name="Lauber J."/>
            <person name="Duesterhoeft A."/>
            <person name="Beyer A."/>
            <person name="Koehrer K."/>
            <person name="Strack N."/>
            <person name="Mewes H.-W."/>
            <person name="Ottenwaelder B."/>
            <person name="Obermaier B."/>
            <person name="Tampe J."/>
            <person name="Heubner D."/>
            <person name="Wambutt R."/>
            <person name="Korn B."/>
            <person name="Klein M."/>
            <person name="Poustka A."/>
        </authorList>
    </citation>
    <scope>NUCLEOTIDE SEQUENCE [LARGE SCALE MRNA] (ISOFORM 2)</scope>
    <source>
        <tissue>Testis</tissue>
    </source>
</reference>
<reference key="4">
    <citation type="journal article" date="2006" name="Nature">
        <title>The DNA sequence, annotation and analysis of human chromosome 3.</title>
        <authorList>
            <person name="Muzny D.M."/>
            <person name="Scherer S.E."/>
            <person name="Kaul R."/>
            <person name="Wang J."/>
            <person name="Yu J."/>
            <person name="Sudbrak R."/>
            <person name="Buhay C.J."/>
            <person name="Chen R."/>
            <person name="Cree A."/>
            <person name="Ding Y."/>
            <person name="Dugan-Rocha S."/>
            <person name="Gill R."/>
            <person name="Gunaratne P."/>
            <person name="Harris R.A."/>
            <person name="Hawes A.C."/>
            <person name="Hernandez J."/>
            <person name="Hodgson A.V."/>
            <person name="Hume J."/>
            <person name="Jackson A."/>
            <person name="Khan Z.M."/>
            <person name="Kovar-Smith C."/>
            <person name="Lewis L.R."/>
            <person name="Lozado R.J."/>
            <person name="Metzker M.L."/>
            <person name="Milosavljevic A."/>
            <person name="Miner G.R."/>
            <person name="Morgan M.B."/>
            <person name="Nazareth L.V."/>
            <person name="Scott G."/>
            <person name="Sodergren E."/>
            <person name="Song X.-Z."/>
            <person name="Steffen D."/>
            <person name="Wei S."/>
            <person name="Wheeler D.A."/>
            <person name="Wright M.W."/>
            <person name="Worley K.C."/>
            <person name="Yuan Y."/>
            <person name="Zhang Z."/>
            <person name="Adams C.Q."/>
            <person name="Ansari-Lari M.A."/>
            <person name="Ayele M."/>
            <person name="Brown M.J."/>
            <person name="Chen G."/>
            <person name="Chen Z."/>
            <person name="Clendenning J."/>
            <person name="Clerc-Blankenburg K.P."/>
            <person name="Chen R."/>
            <person name="Chen Z."/>
            <person name="Davis C."/>
            <person name="Delgado O."/>
            <person name="Dinh H.H."/>
            <person name="Dong W."/>
            <person name="Draper H."/>
            <person name="Ernst S."/>
            <person name="Fu G."/>
            <person name="Gonzalez-Garay M.L."/>
            <person name="Garcia D.K."/>
            <person name="Gillett W."/>
            <person name="Gu J."/>
            <person name="Hao B."/>
            <person name="Haugen E."/>
            <person name="Havlak P."/>
            <person name="He X."/>
            <person name="Hennig S."/>
            <person name="Hu S."/>
            <person name="Huang W."/>
            <person name="Jackson L.R."/>
            <person name="Jacob L.S."/>
            <person name="Kelly S.H."/>
            <person name="Kube M."/>
            <person name="Levy R."/>
            <person name="Li Z."/>
            <person name="Liu B."/>
            <person name="Liu J."/>
            <person name="Liu W."/>
            <person name="Lu J."/>
            <person name="Maheshwari M."/>
            <person name="Nguyen B.-V."/>
            <person name="Okwuonu G.O."/>
            <person name="Palmeiri A."/>
            <person name="Pasternak S."/>
            <person name="Perez L.M."/>
            <person name="Phelps K.A."/>
            <person name="Plopper F.J."/>
            <person name="Qiang B."/>
            <person name="Raymond C."/>
            <person name="Rodriguez R."/>
            <person name="Saenphimmachak C."/>
            <person name="Santibanez J."/>
            <person name="Shen H."/>
            <person name="Shen Y."/>
            <person name="Subramanian S."/>
            <person name="Tabor P.E."/>
            <person name="Verduzco D."/>
            <person name="Waldron L."/>
            <person name="Wang J."/>
            <person name="Wang J."/>
            <person name="Wang Q."/>
            <person name="Williams G.A."/>
            <person name="Wong G.K.-S."/>
            <person name="Yao Z."/>
            <person name="Zhang J."/>
            <person name="Zhang X."/>
            <person name="Zhao G."/>
            <person name="Zhou J."/>
            <person name="Zhou Y."/>
            <person name="Nelson D."/>
            <person name="Lehrach H."/>
            <person name="Reinhardt R."/>
            <person name="Naylor S.L."/>
            <person name="Yang H."/>
            <person name="Olson M."/>
            <person name="Weinstock G."/>
            <person name="Gibbs R.A."/>
        </authorList>
    </citation>
    <scope>NUCLEOTIDE SEQUENCE [LARGE SCALE GENOMIC DNA]</scope>
</reference>
<reference key="5">
    <citation type="journal article" date="2004" name="Genome Res.">
        <title>The status, quality, and expansion of the NIH full-length cDNA project: the Mammalian Gene Collection (MGC).</title>
        <authorList>
            <consortium name="The MGC Project Team"/>
        </authorList>
    </citation>
    <scope>NUCLEOTIDE SEQUENCE [LARGE SCALE MRNA] (ISOFORMS 1 AND 3)</scope>
    <source>
        <tissue>Ovary</tissue>
        <tissue>Skin</tissue>
    </source>
</reference>
<reference key="6">
    <citation type="journal article" date="2008" name="Proc. Natl. Acad. Sci. U.S.A.">
        <title>A quantitative atlas of mitotic phosphorylation.</title>
        <authorList>
            <person name="Dephoure N."/>
            <person name="Zhou C."/>
            <person name="Villen J."/>
            <person name="Beausoleil S.A."/>
            <person name="Bakalarski C.E."/>
            <person name="Elledge S.J."/>
            <person name="Gygi S.P."/>
        </authorList>
    </citation>
    <scope>PHOSPHORYLATION [LARGE SCALE ANALYSIS] AT SER-485 AND SER-822</scope>
    <scope>IDENTIFICATION BY MASS SPECTROMETRY [LARGE SCALE ANALYSIS]</scope>
    <source>
        <tissue>Cervix carcinoma</tissue>
    </source>
</reference>
<reference key="7">
    <citation type="journal article" date="2009" name="Anal. Chem.">
        <title>Lys-N and trypsin cover complementary parts of the phosphoproteome in a refined SCX-based approach.</title>
        <authorList>
            <person name="Gauci S."/>
            <person name="Helbig A.O."/>
            <person name="Slijper M."/>
            <person name="Krijgsveld J."/>
            <person name="Heck A.J."/>
            <person name="Mohammed S."/>
        </authorList>
    </citation>
    <scope>IDENTIFICATION BY MASS SPECTROMETRY [LARGE SCALE ANALYSIS]</scope>
</reference>
<reference key="8">
    <citation type="journal article" date="2009" name="Sci. Signal.">
        <title>Quantitative phosphoproteomic analysis of T cell receptor signaling reveals system-wide modulation of protein-protein interactions.</title>
        <authorList>
            <person name="Mayya V."/>
            <person name="Lundgren D.H."/>
            <person name="Hwang S.-I."/>
            <person name="Rezaul K."/>
            <person name="Wu L."/>
            <person name="Eng J.K."/>
            <person name="Rodionov V."/>
            <person name="Han D.K."/>
        </authorList>
    </citation>
    <scope>PHOSPHORYLATION [LARGE SCALE ANALYSIS] AT SER-844</scope>
    <scope>IDENTIFICATION BY MASS SPECTROMETRY [LARGE SCALE ANALYSIS]</scope>
    <source>
        <tissue>Leukemic T-cell</tissue>
    </source>
</reference>
<reference key="9">
    <citation type="journal article" date="2010" name="Sci. Signal.">
        <title>Quantitative phosphoproteomics reveals widespread full phosphorylation site occupancy during mitosis.</title>
        <authorList>
            <person name="Olsen J.V."/>
            <person name="Vermeulen M."/>
            <person name="Santamaria A."/>
            <person name="Kumar C."/>
            <person name="Miller M.L."/>
            <person name="Jensen L.J."/>
            <person name="Gnad F."/>
            <person name="Cox J."/>
            <person name="Jensen T.S."/>
            <person name="Nigg E.A."/>
            <person name="Brunak S."/>
            <person name="Mann M."/>
        </authorList>
    </citation>
    <scope>PHOSPHORYLATION [LARGE SCALE ANALYSIS] AT SER-243; SER-704 AND SER-822</scope>
    <scope>IDENTIFICATION BY MASS SPECTROMETRY [LARGE SCALE ANALYSIS]</scope>
    <source>
        <tissue>Cervix carcinoma</tissue>
    </source>
</reference>
<reference key="10">
    <citation type="journal article" date="2013" name="J. Proteome Res.">
        <title>Toward a comprehensive characterization of a human cancer cell phosphoproteome.</title>
        <authorList>
            <person name="Zhou H."/>
            <person name="Di Palma S."/>
            <person name="Preisinger C."/>
            <person name="Peng M."/>
            <person name="Polat A.N."/>
            <person name="Heck A.J."/>
            <person name="Mohammed S."/>
        </authorList>
    </citation>
    <scope>PHOSPHORYLATION [LARGE SCALE ANALYSIS] AT SER-844</scope>
    <scope>IDENTIFICATION BY MASS SPECTROMETRY [LARGE SCALE ANALYSIS]</scope>
    <source>
        <tissue>Cervix carcinoma</tissue>
        <tissue>Erythroleukemia</tissue>
    </source>
</reference>
<reference key="11">
    <citation type="journal article" date="2014" name="J. Proteomics">
        <title>An enzyme assisted RP-RPLC approach for in-depth analysis of human liver phosphoproteome.</title>
        <authorList>
            <person name="Bian Y."/>
            <person name="Song C."/>
            <person name="Cheng K."/>
            <person name="Dong M."/>
            <person name="Wang F."/>
            <person name="Huang J."/>
            <person name="Sun D."/>
            <person name="Wang L."/>
            <person name="Ye M."/>
            <person name="Zou H."/>
        </authorList>
    </citation>
    <scope>PHOSPHORYLATION [LARGE SCALE ANALYSIS] AT SER-844</scope>
    <scope>IDENTIFICATION BY MASS SPECTROMETRY [LARGE SCALE ANALYSIS]</scope>
    <source>
        <tissue>Liver</tissue>
    </source>
</reference>
<reference key="12">
    <citation type="journal article" date="2017" name="Nat. Struct. Mol. Biol.">
        <title>Site-specific mapping of the human SUMO proteome reveals co-modification with phosphorylation.</title>
        <authorList>
            <person name="Hendriks I.A."/>
            <person name="Lyon D."/>
            <person name="Young C."/>
            <person name="Jensen L.J."/>
            <person name="Vertegaal A.C."/>
            <person name="Nielsen M.L."/>
        </authorList>
    </citation>
    <scope>SUMOYLATION [LARGE SCALE ANALYSIS] AT LYS-385; LYS-573 AND LYS-696</scope>
    <scope>IDENTIFICATION BY MASS SPECTROMETRY [LARGE SCALE ANALYSIS]</scope>
</reference>
<organism>
    <name type="scientific">Homo sapiens</name>
    <name type="common">Human</name>
    <dbReference type="NCBI Taxonomy" id="9606"/>
    <lineage>
        <taxon>Eukaryota</taxon>
        <taxon>Metazoa</taxon>
        <taxon>Chordata</taxon>
        <taxon>Craniata</taxon>
        <taxon>Vertebrata</taxon>
        <taxon>Euteleostomi</taxon>
        <taxon>Mammalia</taxon>
        <taxon>Eutheria</taxon>
        <taxon>Euarchontoglires</taxon>
        <taxon>Primates</taxon>
        <taxon>Haplorrhini</taxon>
        <taxon>Catarrhini</taxon>
        <taxon>Hominidae</taxon>
        <taxon>Homo</taxon>
    </lineage>
</organism>
<accession>Q8WY36</accession>
<accession>A2RRM7</accession>
<accession>Q2TAJ1</accession>
<accession>Q7L3J8</accession>
<accession>Q7LBY8</accession>
<accession>Q8NDB0</accession>
<accession>Q8WY35</accession>
<accession>Q9H0J6</accession>
<proteinExistence type="evidence at protein level"/>
<comment type="function">
    <text evidence="5">Transcription factor that is necessary for cell cycle progression from G1 to S phase.</text>
</comment>
<comment type="interaction">
    <interactant intactId="EBI-22013474">
        <id>Q8WY36-3</id>
    </interactant>
    <interactant intactId="EBI-466029">
        <id>P42858</id>
        <label>HTT</label>
    </interactant>
    <organismsDiffer>false</organismsDiffer>
    <experiments>6</experiments>
</comment>
<comment type="interaction">
    <interactant intactId="EBI-22013474">
        <id>Q8WY36-3</id>
    </interactant>
    <interactant intactId="EBI-720609">
        <id>O76024</id>
        <label>WFS1</label>
    </interactant>
    <organismsDiffer>false</organismsDiffer>
    <experiments>3</experiments>
</comment>
<comment type="subcellular location">
    <subcellularLocation>
        <location evidence="9">Nucleus</location>
    </subcellularLocation>
</comment>
<comment type="alternative products">
    <event type="alternative splicing"/>
    <isoform>
        <id>Q8WY36-1</id>
        <name>1</name>
        <sequence type="displayed"/>
    </isoform>
    <isoform>
        <id>Q8WY36-2</id>
        <name>2</name>
        <name>BBXa</name>
        <sequence type="described" ref="VSP_018006"/>
    </isoform>
    <isoform>
        <id>Q8WY36-3</id>
        <name>3</name>
        <sequence type="described" ref="VSP_054880 VSP_054881"/>
    </isoform>
</comment>
<comment type="sequence caution" evidence="9">
    <conflict type="miscellaneous discrepancy">
        <sequence resource="EMBL-CDS" id="AAI10904"/>
    </conflict>
    <text>Contaminating sequence. Potential poly-A sequence.</text>
</comment>
<sequence length="941" mass="105130">MKGSNRNKDHSAEGEGVGKRPKRKCLQWHPLLAKKLLDFSEEEEEEDEEEDIDKVQLLGADGLEQDVGETEDDESPEQRARRPMNAFLLFCKRHRSLVRQEHPRLDNRGATKILADWWAVLDPKEKQKYTDMAKEYKDAFMKANPGYKWCPTTNKPVKSPTPTVNPRKKLWAFPSDSSRDLPSPKKAKTEEMPQLNFGMADPTQMGGLSMLLLAGEHALGTPEVSSGTCRPDVSESPELRQKSPLFQFAEISSSTSHSDASTKQCQTSALFQFAEISSNTSQLGGAEPVKRCGKSALFQLAEMCLASEGMKMEESKLIKAKESDGGRIKELEKGKEEKEIKMEKTDETRLQKEAEFEKSAKENLRDSKELRNFEALQIDDIMAIKMEDPKEIRKEELEEDHKCSHFPDFSYSASSKIIISDVPSRKDHMCHPHGIMIIEDPAALNKPEKLKKKKKKSKMDRHGNDKSTPKKTCKKRQSSESDIESVIYTIEAVAKGDWGIEKLGDTPRKKVRTSSSGKGSILDAKPPKKKVKSREKKMSKEKSSDTTKESRPPDFISISASKNISGETPEGIKAEPLTPMEDALPPSLSGQAKPEDSDCHRKIETCGSRKSERSCKGALYKTLVSEGMLTSLRANVDRGKRSSGKGNSSDHEGCWNEESWTFSQSGTSGSKKFKKTKPKEDCLLGSAKLDEEFEKKFNSLPQYSPVTFDRKCVPVPRKKKKTGNVSSEPTKTSKGPFQSQKKNLFHKIVSKYKHKKEKPNVPEKGSGDKWSNKQLFLDAIHPTEAIFSEDRNTMEPVHKVKNIPSIFNTPEPTTTQEPLVGSQKRKARKTKITHLVRTADGRVSPAGGTLDDKPKEQLQRSLPKATETDCNDKCSHNTEVGETRSSTPEMPAVSAFFSLAALAEVAAMENVHRGQRSTPLTHDGQPKEMPQAPVLISCADQ</sequence>
<keyword id="KW-0025">Alternative splicing</keyword>
<keyword id="KW-0175">Coiled coil</keyword>
<keyword id="KW-0238">DNA-binding</keyword>
<keyword id="KW-1017">Isopeptide bond</keyword>
<keyword id="KW-0539">Nucleus</keyword>
<keyword id="KW-0597">Phosphoprotein</keyword>
<keyword id="KW-1267">Proteomics identification</keyword>
<keyword id="KW-1185">Reference proteome</keyword>
<keyword id="KW-0804">Transcription</keyword>
<keyword id="KW-0805">Transcription regulation</keyword>
<keyword id="KW-0832">Ubl conjugation</keyword>
<feature type="chain" id="PRO_0000232885" description="HMG box transcription factor BBX">
    <location>
        <begin position="1"/>
        <end position="941"/>
    </location>
</feature>
<feature type="DNA-binding region" description="HMG box" evidence="3">
    <location>
        <begin position="80"/>
        <end position="148"/>
    </location>
</feature>
<feature type="region of interest" description="Disordered" evidence="4">
    <location>
        <begin position="1"/>
        <end position="21"/>
    </location>
</feature>
<feature type="region of interest" description="Disordered" evidence="4">
    <location>
        <begin position="39"/>
        <end position="80"/>
    </location>
</feature>
<feature type="region of interest" description="Disordered" evidence="4">
    <location>
        <begin position="157"/>
        <end position="200"/>
    </location>
</feature>
<feature type="region of interest" description="Disordered" evidence="4">
    <location>
        <begin position="221"/>
        <end position="242"/>
    </location>
</feature>
<feature type="region of interest" description="Disordered" evidence="4">
    <location>
        <begin position="438"/>
        <end position="482"/>
    </location>
</feature>
<feature type="region of interest" description="Disordered" evidence="4">
    <location>
        <begin position="499"/>
        <end position="600"/>
    </location>
</feature>
<feature type="region of interest" description="Disordered" evidence="4">
    <location>
        <begin position="635"/>
        <end position="677"/>
    </location>
</feature>
<feature type="region of interest" description="Disordered" evidence="4">
    <location>
        <begin position="714"/>
        <end position="771"/>
    </location>
</feature>
<feature type="region of interest" description="Disordered" evidence="4">
    <location>
        <begin position="803"/>
        <end position="888"/>
    </location>
</feature>
<feature type="region of interest" description="Disordered" evidence="4">
    <location>
        <begin position="912"/>
        <end position="941"/>
    </location>
</feature>
<feature type="coiled-coil region" evidence="2">
    <location>
        <begin position="326"/>
        <end position="370"/>
    </location>
</feature>
<feature type="compositionally biased region" description="Basic and acidic residues" evidence="4">
    <location>
        <begin position="1"/>
        <end position="18"/>
    </location>
</feature>
<feature type="compositionally biased region" description="Acidic residues" evidence="4">
    <location>
        <begin position="39"/>
        <end position="52"/>
    </location>
</feature>
<feature type="compositionally biased region" description="Acidic residues" evidence="4">
    <location>
        <begin position="63"/>
        <end position="75"/>
    </location>
</feature>
<feature type="compositionally biased region" description="Basic and acidic residues" evidence="4">
    <location>
        <begin position="177"/>
        <end position="191"/>
    </location>
</feature>
<feature type="compositionally biased region" description="Basic residues" evidence="4">
    <location>
        <begin position="449"/>
        <end position="459"/>
    </location>
</feature>
<feature type="compositionally biased region" description="Basic and acidic residues" evidence="4">
    <location>
        <begin position="499"/>
        <end position="508"/>
    </location>
</feature>
<feature type="compositionally biased region" description="Basic and acidic residues" evidence="4">
    <location>
        <begin position="536"/>
        <end position="552"/>
    </location>
</feature>
<feature type="compositionally biased region" description="Low complexity" evidence="4">
    <location>
        <begin position="661"/>
        <end position="670"/>
    </location>
</feature>
<feature type="compositionally biased region" description="Polar residues" evidence="4">
    <location>
        <begin position="723"/>
        <end position="742"/>
    </location>
</feature>
<feature type="compositionally biased region" description="Basic residues" evidence="4">
    <location>
        <begin position="743"/>
        <end position="757"/>
    </location>
</feature>
<feature type="compositionally biased region" description="Basic and acidic residues" evidence="4">
    <location>
        <begin position="758"/>
        <end position="771"/>
    </location>
</feature>
<feature type="compositionally biased region" description="Polar residues" evidence="4">
    <location>
        <begin position="805"/>
        <end position="817"/>
    </location>
</feature>
<feature type="compositionally biased region" description="Basic residues" evidence="4">
    <location>
        <begin position="823"/>
        <end position="834"/>
    </location>
</feature>
<feature type="compositionally biased region" description="Basic and acidic residues" evidence="4">
    <location>
        <begin position="866"/>
        <end position="882"/>
    </location>
</feature>
<feature type="modified residue" description="Phosphoserine" evidence="12">
    <location>
        <position position="243"/>
    </location>
</feature>
<feature type="modified residue" description="Phosphoserine" evidence="1">
    <location>
        <position position="478"/>
    </location>
</feature>
<feature type="modified residue" description="Phosphoserine" evidence="10">
    <location>
        <position position="485"/>
    </location>
</feature>
<feature type="modified residue" description="Phosphoserine" evidence="12">
    <location>
        <position position="704"/>
    </location>
</feature>
<feature type="modified residue" description="Phosphoserine" evidence="10 12">
    <location>
        <position position="822"/>
    </location>
</feature>
<feature type="modified residue" description="Phosphoserine" evidence="11 13 14">
    <location>
        <position position="844"/>
    </location>
</feature>
<feature type="cross-link" description="Glycyl lysine isopeptide (Lys-Gly) (interchain with G-Cter in SUMO2)" evidence="15">
    <location>
        <position position="385"/>
    </location>
</feature>
<feature type="cross-link" description="Glycyl lysine isopeptide (Lys-Gly) (interchain with G-Cter in SUMO2)" evidence="15">
    <location>
        <position position="573"/>
    </location>
</feature>
<feature type="cross-link" description="Glycyl lysine isopeptide (Lys-Gly) (interchain with G-Cter in SUMO2)" evidence="15">
    <location>
        <position position="696"/>
    </location>
</feature>
<feature type="splice variant" id="VSP_054880" description="In isoform 3." evidence="7">
    <original>MCLASEGMKMEESKLIKAKESDGGRIKELEKGKEEKEIKMEKTDETRLQKEAEFEKSAKENLRDSKELRNFEALQIDDIMAIKMEDPKEIRKEELEEDHKCSHFPDFSYSASSKIIISDVPSRKDHMCHPHGIMIIEDPAALNKPEKLKKKKKKSKMDRHGNDKSTPKKTCKKRQSSESDIESVIYTIEAVAKGDWGIEKLGDTPRKKVRTSSSGKGSILDAKPPKKKVKSREKKMSKEKSSDTTKESRPPDFISISASKNISGETPEGIKAEPLTPMEDALPPSLSGQAKPEDSDCHRKIETCGSRKSERSCKGALYKTLVSEGM</original>
    <variation>ENEAQEKETPLIMKGVGMKKAGHLVRVGPVGARSSRRQSQKKTVSLAPQSWMKNLKKNSTASLNIVLLHLTGNVYLSQEKRRRLEMCPQNRLKPAKVLSSLRKRTYSTKLSANISTKRRSPMFRKKEVGINGQTSNSSWMPFTLQKPYFQKTETPWSLFIRLKISHPFSTLQSQQQRKNLWWAAKREKQGKPRLHTLSGQQMAGYHQQEVLWMTNQRNNCRGVSLKQLRQTAMTNAHTTPRSGRRGAVLQKCLPCLRSLASLRWLKWQPWKMCTEVRGQLRSPMMDSQKKCRRLLYLFPALTSEAPFHCKTLCFTYYPSLVFTEGC</variation>
    <location>
        <begin position="303"/>
        <end position="628"/>
    </location>
</feature>
<feature type="splice variant" id="VSP_054881" description="In isoform 3." evidence="7">
    <location>
        <begin position="629"/>
        <end position="941"/>
    </location>
</feature>
<feature type="splice variant" id="VSP_018006" description="In isoform 2." evidence="6 8">
    <location>
        <begin position="735"/>
        <end position="764"/>
    </location>
</feature>
<feature type="sequence variant" id="VAR_061264" description="In dbSNP:rs59781647.">
    <original>P</original>
    <variation>S</variation>
    <location>
        <position position="576"/>
    </location>
</feature>
<name>BBX_HUMAN</name>